<reference key="1">
    <citation type="submission" date="2007-04" db="EMBL/GenBank/DDBJ databases">
        <title>Complete sequence of Shewanella putrefaciens CN-32.</title>
        <authorList>
            <consortium name="US DOE Joint Genome Institute"/>
            <person name="Copeland A."/>
            <person name="Lucas S."/>
            <person name="Lapidus A."/>
            <person name="Barry K."/>
            <person name="Detter J.C."/>
            <person name="Glavina del Rio T."/>
            <person name="Hammon N."/>
            <person name="Israni S."/>
            <person name="Dalin E."/>
            <person name="Tice H."/>
            <person name="Pitluck S."/>
            <person name="Chain P."/>
            <person name="Malfatti S."/>
            <person name="Shin M."/>
            <person name="Vergez L."/>
            <person name="Schmutz J."/>
            <person name="Larimer F."/>
            <person name="Land M."/>
            <person name="Hauser L."/>
            <person name="Kyrpides N."/>
            <person name="Mikhailova N."/>
            <person name="Romine M.F."/>
            <person name="Fredrickson J."/>
            <person name="Tiedje J."/>
            <person name="Richardson P."/>
        </authorList>
    </citation>
    <scope>NUCLEOTIDE SEQUENCE [LARGE SCALE GENOMIC DNA]</scope>
    <source>
        <strain>CN-32 / ATCC BAA-453</strain>
    </source>
</reference>
<evidence type="ECO:0000255" key="1">
    <source>
        <dbReference type="HAMAP-Rule" id="MF_01174"/>
    </source>
</evidence>
<accession>A4Y344</accession>
<gene>
    <name evidence="1" type="primary">astD</name>
    <name type="ordered locus">Sputcn32_0647</name>
</gene>
<protein>
    <recommendedName>
        <fullName evidence="1">N-succinylglutamate 5-semialdehyde dehydrogenase</fullName>
        <ecNumber evidence="1">1.2.1.71</ecNumber>
    </recommendedName>
    <alternativeName>
        <fullName evidence="1">Succinylglutamic semialdehyde dehydrogenase</fullName>
        <shortName evidence="1">SGSD</shortName>
    </alternativeName>
</protein>
<sequence length="486" mass="51521">MTHYIQGQWHTGNGHDVTSINPANGETIWCGKTATAEQVNTAVEAARAAQFDWFMLGFDARLAIVEAYRSQLEANKAELAETIAQETGKPQWETATEVGAMIGKIALSAAAYHKRTGTEANDTPAGRAVIRHKPHGVVAVFGPYNFPGHLPNGHIVPALLAGNTVIFKPSELTPKVAELMVKLWDKAGLPAGVINLVQGEVDTGKALASHPQIDGLFFTGSSRTGHLLHQQYAGHPGKILALEMGGNNPLIIKGVQDIKAAVHDILQSAYISSGQRCTCARRLYVEQGEQGDALIALLVDAVKQIKVGPWNAQPQPFMGSMISETAAKGMVAAQANLLDLGGKVLVELTHLQAGTGLVSPGLIDVTAIDVLPDEEYFGPLLQLVRYGDFDQAIKLANQTRYGLSAGLLADSREDYDYFLARIRAGIVNWNKQITGASGAAPFGGVGASGNHRASAFYAADYCAYPVASVEADAVSLPATLSPGLSL</sequence>
<name>ASTD_SHEPC</name>
<feature type="chain" id="PRO_1000065766" description="N-succinylglutamate 5-semialdehyde dehydrogenase">
    <location>
        <begin position="1"/>
        <end position="486"/>
    </location>
</feature>
<feature type="active site" evidence="1">
    <location>
        <position position="243"/>
    </location>
</feature>
<feature type="active site" evidence="1">
    <location>
        <position position="277"/>
    </location>
</feature>
<feature type="binding site" evidence="1">
    <location>
        <begin position="220"/>
        <end position="225"/>
    </location>
    <ligand>
        <name>NAD(+)</name>
        <dbReference type="ChEBI" id="CHEBI:57540"/>
    </ligand>
</feature>
<proteinExistence type="inferred from homology"/>
<dbReference type="EC" id="1.2.1.71" evidence="1"/>
<dbReference type="EMBL" id="CP000681">
    <property type="protein sequence ID" value="ABP74377.1"/>
    <property type="molecule type" value="Genomic_DNA"/>
</dbReference>
<dbReference type="SMR" id="A4Y344"/>
<dbReference type="STRING" id="319224.Sputcn32_0647"/>
<dbReference type="KEGG" id="spc:Sputcn32_0647"/>
<dbReference type="eggNOG" id="COG1012">
    <property type="taxonomic scope" value="Bacteria"/>
</dbReference>
<dbReference type="HOGENOM" id="CLU_005391_1_0_6"/>
<dbReference type="UniPathway" id="UPA00185">
    <property type="reaction ID" value="UER00282"/>
</dbReference>
<dbReference type="GO" id="GO:0043824">
    <property type="term" value="F:succinylglutamate-semialdehyde dehydrogenase activity"/>
    <property type="evidence" value="ECO:0007669"/>
    <property type="project" value="UniProtKB-EC"/>
</dbReference>
<dbReference type="GO" id="GO:0019544">
    <property type="term" value="P:arginine catabolic process to glutamate"/>
    <property type="evidence" value="ECO:0007669"/>
    <property type="project" value="UniProtKB-UniRule"/>
</dbReference>
<dbReference type="GO" id="GO:0019545">
    <property type="term" value="P:arginine catabolic process to succinate"/>
    <property type="evidence" value="ECO:0007669"/>
    <property type="project" value="UniProtKB-UniRule"/>
</dbReference>
<dbReference type="CDD" id="cd07095">
    <property type="entry name" value="ALDH_SGSD_AstD"/>
    <property type="match status" value="1"/>
</dbReference>
<dbReference type="FunFam" id="3.40.309.10:FF:000013">
    <property type="entry name" value="N-succinylglutamate 5-semialdehyde dehydrogenase"/>
    <property type="match status" value="1"/>
</dbReference>
<dbReference type="FunFam" id="3.40.605.10:FF:000010">
    <property type="entry name" value="N-succinylglutamate 5-semialdehyde dehydrogenase"/>
    <property type="match status" value="1"/>
</dbReference>
<dbReference type="Gene3D" id="3.40.605.10">
    <property type="entry name" value="Aldehyde Dehydrogenase, Chain A, domain 1"/>
    <property type="match status" value="1"/>
</dbReference>
<dbReference type="Gene3D" id="3.40.309.10">
    <property type="entry name" value="Aldehyde Dehydrogenase, Chain A, domain 2"/>
    <property type="match status" value="1"/>
</dbReference>
<dbReference type="HAMAP" id="MF_01174">
    <property type="entry name" value="Aldedh_AstD"/>
    <property type="match status" value="1"/>
</dbReference>
<dbReference type="InterPro" id="IPR016161">
    <property type="entry name" value="Ald_DH/histidinol_DH"/>
</dbReference>
<dbReference type="InterPro" id="IPR016163">
    <property type="entry name" value="Ald_DH_C"/>
</dbReference>
<dbReference type="InterPro" id="IPR016160">
    <property type="entry name" value="Ald_DH_CS_CYS"/>
</dbReference>
<dbReference type="InterPro" id="IPR029510">
    <property type="entry name" value="Ald_DH_CS_GLU"/>
</dbReference>
<dbReference type="InterPro" id="IPR016162">
    <property type="entry name" value="Ald_DH_N"/>
</dbReference>
<dbReference type="InterPro" id="IPR015590">
    <property type="entry name" value="Aldehyde_DH_dom"/>
</dbReference>
<dbReference type="InterPro" id="IPR017649">
    <property type="entry name" value="SuccinylGlu_semiald_DH_AstD"/>
</dbReference>
<dbReference type="NCBIfam" id="TIGR03240">
    <property type="entry name" value="arg_catab_astD"/>
    <property type="match status" value="1"/>
</dbReference>
<dbReference type="NCBIfam" id="NF006992">
    <property type="entry name" value="PRK09457.1"/>
    <property type="match status" value="1"/>
</dbReference>
<dbReference type="PANTHER" id="PTHR11699">
    <property type="entry name" value="ALDEHYDE DEHYDROGENASE-RELATED"/>
    <property type="match status" value="1"/>
</dbReference>
<dbReference type="Pfam" id="PF00171">
    <property type="entry name" value="Aldedh"/>
    <property type="match status" value="1"/>
</dbReference>
<dbReference type="SUPFAM" id="SSF53720">
    <property type="entry name" value="ALDH-like"/>
    <property type="match status" value="1"/>
</dbReference>
<dbReference type="PROSITE" id="PS00070">
    <property type="entry name" value="ALDEHYDE_DEHYDR_CYS"/>
    <property type="match status" value="1"/>
</dbReference>
<dbReference type="PROSITE" id="PS00687">
    <property type="entry name" value="ALDEHYDE_DEHYDR_GLU"/>
    <property type="match status" value="1"/>
</dbReference>
<organism>
    <name type="scientific">Shewanella putrefaciens (strain CN-32 / ATCC BAA-453)</name>
    <dbReference type="NCBI Taxonomy" id="319224"/>
    <lineage>
        <taxon>Bacteria</taxon>
        <taxon>Pseudomonadati</taxon>
        <taxon>Pseudomonadota</taxon>
        <taxon>Gammaproteobacteria</taxon>
        <taxon>Alteromonadales</taxon>
        <taxon>Shewanellaceae</taxon>
        <taxon>Shewanella</taxon>
    </lineage>
</organism>
<comment type="function">
    <text evidence="1">Catalyzes the NAD-dependent reduction of succinylglutamate semialdehyde into succinylglutamate.</text>
</comment>
<comment type="catalytic activity">
    <reaction evidence="1">
        <text>N-succinyl-L-glutamate 5-semialdehyde + NAD(+) + H2O = N-succinyl-L-glutamate + NADH + 2 H(+)</text>
        <dbReference type="Rhea" id="RHEA:10812"/>
        <dbReference type="ChEBI" id="CHEBI:15377"/>
        <dbReference type="ChEBI" id="CHEBI:15378"/>
        <dbReference type="ChEBI" id="CHEBI:57540"/>
        <dbReference type="ChEBI" id="CHEBI:57945"/>
        <dbReference type="ChEBI" id="CHEBI:58520"/>
        <dbReference type="ChEBI" id="CHEBI:58763"/>
        <dbReference type="EC" id="1.2.1.71"/>
    </reaction>
</comment>
<comment type="pathway">
    <text evidence="1">Amino-acid degradation; L-arginine degradation via AST pathway; L-glutamate and succinate from L-arginine: step 4/5.</text>
</comment>
<comment type="similarity">
    <text evidence="1">Belongs to the aldehyde dehydrogenase family. AstD subfamily.</text>
</comment>
<keyword id="KW-0056">Arginine metabolism</keyword>
<keyword id="KW-0520">NAD</keyword>
<keyword id="KW-0560">Oxidoreductase</keyword>